<accession>Q14IU8</accession>
<keyword id="KW-0456">Lyase</keyword>
<keyword id="KW-0663">Pyridoxal phosphate</keyword>
<keyword id="KW-0704">Schiff base</keyword>
<proteinExistence type="inferred from homology"/>
<dbReference type="EC" id="4.3.3.6" evidence="1"/>
<dbReference type="EMBL" id="AM286280">
    <property type="protein sequence ID" value="CAL08527.1"/>
    <property type="molecule type" value="Genomic_DNA"/>
</dbReference>
<dbReference type="RefSeq" id="WP_003016899.1">
    <property type="nucleotide sequence ID" value="NC_008245.1"/>
</dbReference>
<dbReference type="SMR" id="Q14IU8"/>
<dbReference type="KEGG" id="ftf:FTF0511"/>
<dbReference type="HOGENOM" id="CLU_055352_1_0_6"/>
<dbReference type="UniPathway" id="UPA00245"/>
<dbReference type="GO" id="GO:0036381">
    <property type="term" value="F:pyridoxal 5'-phosphate synthase (glutamine hydrolysing) activity"/>
    <property type="evidence" value="ECO:0007669"/>
    <property type="project" value="UniProtKB-UniRule"/>
</dbReference>
<dbReference type="GO" id="GO:0006520">
    <property type="term" value="P:amino acid metabolic process"/>
    <property type="evidence" value="ECO:0007669"/>
    <property type="project" value="TreeGrafter"/>
</dbReference>
<dbReference type="GO" id="GO:0042823">
    <property type="term" value="P:pyridoxal phosphate biosynthetic process"/>
    <property type="evidence" value="ECO:0007669"/>
    <property type="project" value="UniProtKB-UniRule"/>
</dbReference>
<dbReference type="GO" id="GO:0008615">
    <property type="term" value="P:pyridoxine biosynthetic process"/>
    <property type="evidence" value="ECO:0007669"/>
    <property type="project" value="TreeGrafter"/>
</dbReference>
<dbReference type="CDD" id="cd04727">
    <property type="entry name" value="pdxS"/>
    <property type="match status" value="1"/>
</dbReference>
<dbReference type="FunFam" id="3.20.20.70:FF:000001">
    <property type="entry name" value="Pyridoxine biosynthesis protein PDX1"/>
    <property type="match status" value="1"/>
</dbReference>
<dbReference type="Gene3D" id="3.20.20.70">
    <property type="entry name" value="Aldolase class I"/>
    <property type="match status" value="1"/>
</dbReference>
<dbReference type="HAMAP" id="MF_01824">
    <property type="entry name" value="PdxS"/>
    <property type="match status" value="1"/>
</dbReference>
<dbReference type="InterPro" id="IPR013785">
    <property type="entry name" value="Aldolase_TIM"/>
</dbReference>
<dbReference type="InterPro" id="IPR001852">
    <property type="entry name" value="PdxS/SNZ"/>
</dbReference>
<dbReference type="InterPro" id="IPR033755">
    <property type="entry name" value="PdxS/SNZ_N"/>
</dbReference>
<dbReference type="InterPro" id="IPR011060">
    <property type="entry name" value="RibuloseP-bd_barrel"/>
</dbReference>
<dbReference type="NCBIfam" id="NF003215">
    <property type="entry name" value="PRK04180.1"/>
    <property type="match status" value="1"/>
</dbReference>
<dbReference type="NCBIfam" id="TIGR00343">
    <property type="entry name" value="pyridoxal 5'-phosphate synthase lyase subunit PdxS"/>
    <property type="match status" value="1"/>
</dbReference>
<dbReference type="PANTHER" id="PTHR31829">
    <property type="entry name" value="PYRIDOXAL 5'-PHOSPHATE SYNTHASE SUBUNIT SNZ1-RELATED"/>
    <property type="match status" value="1"/>
</dbReference>
<dbReference type="PANTHER" id="PTHR31829:SF0">
    <property type="entry name" value="PYRIDOXAL 5'-PHOSPHATE SYNTHASE SUBUNIT SNZ1-RELATED"/>
    <property type="match status" value="1"/>
</dbReference>
<dbReference type="Pfam" id="PF01680">
    <property type="entry name" value="SOR_SNZ"/>
    <property type="match status" value="1"/>
</dbReference>
<dbReference type="PIRSF" id="PIRSF029271">
    <property type="entry name" value="Pdx1"/>
    <property type="match status" value="1"/>
</dbReference>
<dbReference type="SUPFAM" id="SSF51366">
    <property type="entry name" value="Ribulose-phoshate binding barrel"/>
    <property type="match status" value="1"/>
</dbReference>
<dbReference type="PROSITE" id="PS01235">
    <property type="entry name" value="PDXS_SNZ_1"/>
    <property type="match status" value="1"/>
</dbReference>
<dbReference type="PROSITE" id="PS51129">
    <property type="entry name" value="PDXS_SNZ_2"/>
    <property type="match status" value="1"/>
</dbReference>
<protein>
    <recommendedName>
        <fullName evidence="1">Pyridoxal 5'-phosphate synthase subunit PdxS</fullName>
        <shortName evidence="1">PLP synthase subunit PdxS</shortName>
        <ecNumber evidence="1">4.3.3.6</ecNumber>
    </recommendedName>
    <alternativeName>
        <fullName evidence="1">Pdx1</fullName>
    </alternativeName>
</protein>
<reference key="1">
    <citation type="journal article" date="2007" name="PLoS ONE">
        <title>Genome sequencing shows that European isolates of Francisella tularensis subspecies tularensis are almost identical to US laboratory strain Schu S4.</title>
        <authorList>
            <person name="Chaudhuri R.R."/>
            <person name="Ren C.-P."/>
            <person name="Desmond L."/>
            <person name="Vincent G.A."/>
            <person name="Silman N.J."/>
            <person name="Brehm J.K."/>
            <person name="Elmore M.J."/>
            <person name="Hudson M.J."/>
            <person name="Forsman M."/>
            <person name="Isherwood K.E."/>
            <person name="Gurycova D."/>
            <person name="Minton N.P."/>
            <person name="Titball R.W."/>
            <person name="Pallen M.J."/>
            <person name="Vipond R."/>
        </authorList>
    </citation>
    <scope>NUCLEOTIDE SEQUENCE [LARGE SCALE GENOMIC DNA]</scope>
    <source>
        <strain>FSC 198</strain>
    </source>
</reference>
<name>PDXS_FRAT1</name>
<organism>
    <name type="scientific">Francisella tularensis subsp. tularensis (strain FSC 198)</name>
    <dbReference type="NCBI Taxonomy" id="393115"/>
    <lineage>
        <taxon>Bacteria</taxon>
        <taxon>Pseudomonadati</taxon>
        <taxon>Pseudomonadota</taxon>
        <taxon>Gammaproteobacteria</taxon>
        <taxon>Thiotrichales</taxon>
        <taxon>Francisellaceae</taxon>
        <taxon>Francisella</taxon>
    </lineage>
</organism>
<feature type="chain" id="PRO_1000070370" description="Pyridoxal 5'-phosphate synthase subunit PdxS">
    <location>
        <begin position="1"/>
        <end position="287"/>
    </location>
</feature>
<feature type="active site" description="Schiff-base intermediate with D-ribose 5-phosphate" evidence="1">
    <location>
        <position position="78"/>
    </location>
</feature>
<feature type="binding site" evidence="1">
    <location>
        <position position="21"/>
    </location>
    <ligand>
        <name>D-ribose 5-phosphate</name>
        <dbReference type="ChEBI" id="CHEBI:78346"/>
    </ligand>
</feature>
<feature type="binding site" evidence="1">
    <location>
        <position position="150"/>
    </location>
    <ligand>
        <name>D-ribose 5-phosphate</name>
        <dbReference type="ChEBI" id="CHEBI:78346"/>
    </ligand>
</feature>
<feature type="binding site" evidence="1">
    <location>
        <position position="162"/>
    </location>
    <ligand>
        <name>D-glyceraldehyde 3-phosphate</name>
        <dbReference type="ChEBI" id="CHEBI:59776"/>
    </ligand>
</feature>
<feature type="binding site" evidence="1">
    <location>
        <position position="211"/>
    </location>
    <ligand>
        <name>D-ribose 5-phosphate</name>
        <dbReference type="ChEBI" id="CHEBI:78346"/>
    </ligand>
</feature>
<feature type="binding site" evidence="1">
    <location>
        <begin position="232"/>
        <end position="233"/>
    </location>
    <ligand>
        <name>D-ribose 5-phosphate</name>
        <dbReference type="ChEBI" id="CHEBI:78346"/>
    </ligand>
</feature>
<gene>
    <name evidence="1" type="primary">pdxS</name>
    <name type="ordered locus">FTF0511</name>
</gene>
<evidence type="ECO:0000255" key="1">
    <source>
        <dbReference type="HAMAP-Rule" id="MF_01824"/>
    </source>
</evidence>
<comment type="function">
    <text evidence="1">Catalyzes the formation of pyridoxal 5'-phosphate from ribose 5-phosphate (RBP), glyceraldehyde 3-phosphate (G3P) and ammonia. The ammonia is provided by the PdxT subunit. Can also use ribulose 5-phosphate and dihydroxyacetone phosphate as substrates, resulting from enzyme-catalyzed isomerization of RBP and G3P, respectively.</text>
</comment>
<comment type="catalytic activity">
    <reaction evidence="1">
        <text>aldehydo-D-ribose 5-phosphate + D-glyceraldehyde 3-phosphate + L-glutamine = pyridoxal 5'-phosphate + L-glutamate + phosphate + 3 H2O + H(+)</text>
        <dbReference type="Rhea" id="RHEA:31507"/>
        <dbReference type="ChEBI" id="CHEBI:15377"/>
        <dbReference type="ChEBI" id="CHEBI:15378"/>
        <dbReference type="ChEBI" id="CHEBI:29985"/>
        <dbReference type="ChEBI" id="CHEBI:43474"/>
        <dbReference type="ChEBI" id="CHEBI:58273"/>
        <dbReference type="ChEBI" id="CHEBI:58359"/>
        <dbReference type="ChEBI" id="CHEBI:59776"/>
        <dbReference type="ChEBI" id="CHEBI:597326"/>
        <dbReference type="EC" id="4.3.3.6"/>
    </reaction>
</comment>
<comment type="pathway">
    <text evidence="1">Cofactor biosynthesis; pyridoxal 5'-phosphate biosynthesis.</text>
</comment>
<comment type="subunit">
    <text evidence="1">In the presence of PdxT, forms a dodecamer of heterodimers.</text>
</comment>
<comment type="similarity">
    <text evidence="1">Belongs to the PdxS/SNZ family.</text>
</comment>
<sequence>MSDINIKIGLAEMLKGGVIMDVVNAEQAEIAQQAGAVAVMALERVPADIRKDGGIARMSDPKLIKEIMSVVSIPVMAKARIGHFVEAQILESLGVDFIDESEVLTPADELNHIDKDSFKVPFVCGCTNLGEALRRIGEGAALIRTKGEAGTGNIVEAVRQLRQVNKDINYIKNADKSELMAIAKNLQAPYDLVTYVHKNGKLPVPNFSAGGVATPADAALMMQLGAESVFVGSGIFKSADPLKRARAIVSAVTYYNDAKILAEVSEDLGEPMTGINCDFEKFSQRGW</sequence>